<protein>
    <recommendedName>
        <fullName>Probable monofunctional riboflavin biosynthesis protein RIBA 3, chloroplastic</fullName>
    </recommendedName>
    <domain>
        <recommendedName>
            <fullName>Inactive 3,4-dihydroxy-2-butanone 4-phosphate synthase</fullName>
            <shortName>DHBP synthase</shortName>
        </recommendedName>
    </domain>
    <domain>
        <recommendedName>
            <fullName>GTP cyclohydrolase-2</fullName>
            <ecNumber>3.5.4.25</ecNumber>
        </recommendedName>
        <alternativeName>
            <fullName>GTP cyclohydrolase II</fullName>
        </alternativeName>
    </domain>
</protein>
<dbReference type="EC" id="3.5.4.25"/>
<dbReference type="EMBL" id="AC117265">
    <property type="protein sequence ID" value="AAT39168.1"/>
    <property type="molecule type" value="Genomic_DNA"/>
</dbReference>
<dbReference type="EMBL" id="AP008211">
    <property type="protein sequence ID" value="BAF17671.1"/>
    <property type="molecule type" value="Genomic_DNA"/>
</dbReference>
<dbReference type="EMBL" id="AP014961">
    <property type="protein sequence ID" value="BAS94403.1"/>
    <property type="molecule type" value="Genomic_DNA"/>
</dbReference>
<dbReference type="EMBL" id="CM000142">
    <property type="protein sequence ID" value="EEE63987.1"/>
    <property type="molecule type" value="Genomic_DNA"/>
</dbReference>
<dbReference type="EMBL" id="AY224441">
    <property type="protein sequence ID" value="AAO72560.1"/>
    <property type="molecule type" value="mRNA"/>
</dbReference>
<dbReference type="RefSeq" id="XP_015637605.1">
    <property type="nucleotide sequence ID" value="XM_015782119.1"/>
</dbReference>
<dbReference type="SMR" id="Q6L506"/>
<dbReference type="BioGRID" id="808054">
    <property type="interactions" value="1"/>
</dbReference>
<dbReference type="FunCoup" id="Q6L506">
    <property type="interactions" value="359"/>
</dbReference>
<dbReference type="IntAct" id="Q6L506">
    <property type="interactions" value="1"/>
</dbReference>
<dbReference type="STRING" id="39947.Q6L506"/>
<dbReference type="PaxDb" id="39947-Q6L506"/>
<dbReference type="EnsemblPlants" id="Os05t0460600-01">
    <property type="protein sequence ID" value="Os05t0460600-01"/>
    <property type="gene ID" value="Os05g0460600"/>
</dbReference>
<dbReference type="Gramene" id="Os05t0460600-01">
    <property type="protein sequence ID" value="Os05t0460600-01"/>
    <property type="gene ID" value="Os05g0460600"/>
</dbReference>
<dbReference type="KEGG" id="dosa:Os05g0460600"/>
<dbReference type="eggNOG" id="KOG1284">
    <property type="taxonomic scope" value="Eukaryota"/>
</dbReference>
<dbReference type="HOGENOM" id="CLU_020273_1_1_1"/>
<dbReference type="InParanoid" id="Q6L506"/>
<dbReference type="OMA" id="ECRGLIC"/>
<dbReference type="OrthoDB" id="60371at2759"/>
<dbReference type="PlantReactome" id="R-OSA-1119379">
    <property type="pathway name" value="Flavin biosynthesis"/>
</dbReference>
<dbReference type="UniPathway" id="UPA00275">
    <property type="reaction ID" value="UER00400"/>
</dbReference>
<dbReference type="Proteomes" id="UP000000763">
    <property type="component" value="Chromosome 5"/>
</dbReference>
<dbReference type="Proteomes" id="UP000007752">
    <property type="component" value="Chromosome 5"/>
</dbReference>
<dbReference type="Proteomes" id="UP000059680">
    <property type="component" value="Chromosome 5"/>
</dbReference>
<dbReference type="ExpressionAtlas" id="Q6L506">
    <property type="expression patterns" value="baseline and differential"/>
</dbReference>
<dbReference type="GO" id="GO:0009507">
    <property type="term" value="C:chloroplast"/>
    <property type="evidence" value="ECO:0007669"/>
    <property type="project" value="UniProtKB-SubCell"/>
</dbReference>
<dbReference type="GO" id="GO:0005829">
    <property type="term" value="C:cytosol"/>
    <property type="evidence" value="ECO:0000318"/>
    <property type="project" value="GO_Central"/>
</dbReference>
<dbReference type="GO" id="GO:0008686">
    <property type="term" value="F:3,4-dihydroxy-2-butanone-4-phosphate synthase activity"/>
    <property type="evidence" value="ECO:0000318"/>
    <property type="project" value="GO_Central"/>
</dbReference>
<dbReference type="GO" id="GO:0005525">
    <property type="term" value="F:GTP binding"/>
    <property type="evidence" value="ECO:0007669"/>
    <property type="project" value="UniProtKB-KW"/>
</dbReference>
<dbReference type="GO" id="GO:0003935">
    <property type="term" value="F:GTP cyclohydrolase II activity"/>
    <property type="evidence" value="ECO:0007669"/>
    <property type="project" value="UniProtKB-EC"/>
</dbReference>
<dbReference type="GO" id="GO:0046872">
    <property type="term" value="F:metal ion binding"/>
    <property type="evidence" value="ECO:0007669"/>
    <property type="project" value="UniProtKB-KW"/>
</dbReference>
<dbReference type="GO" id="GO:0009231">
    <property type="term" value="P:riboflavin biosynthetic process"/>
    <property type="evidence" value="ECO:0000318"/>
    <property type="project" value="GO_Central"/>
</dbReference>
<dbReference type="CDD" id="cd00641">
    <property type="entry name" value="GTP_cyclohydro2"/>
    <property type="match status" value="1"/>
</dbReference>
<dbReference type="FunFam" id="3.90.870.10:FF:000005">
    <property type="entry name" value="Bifunctional riboflavin biosynthesis protein RIBA 1 chloroplastic"/>
    <property type="match status" value="1"/>
</dbReference>
<dbReference type="FunFam" id="3.40.50.10990:FF:000001">
    <property type="entry name" value="Riboflavin biosynthesis protein RibBA"/>
    <property type="match status" value="1"/>
</dbReference>
<dbReference type="Gene3D" id="3.90.870.10">
    <property type="entry name" value="DHBP synthase"/>
    <property type="match status" value="1"/>
</dbReference>
<dbReference type="Gene3D" id="3.40.50.10990">
    <property type="entry name" value="GTP cyclohydrolase II"/>
    <property type="match status" value="1"/>
</dbReference>
<dbReference type="HAMAP" id="MF_00179">
    <property type="entry name" value="RibA"/>
    <property type="match status" value="1"/>
</dbReference>
<dbReference type="HAMAP" id="MF_01283">
    <property type="entry name" value="RibBA"/>
    <property type="match status" value="1"/>
</dbReference>
<dbReference type="InterPro" id="IPR017945">
    <property type="entry name" value="DHBP_synth_RibB-like_a/b_dom"/>
</dbReference>
<dbReference type="InterPro" id="IPR000422">
    <property type="entry name" value="DHBP_synthase_RibB"/>
</dbReference>
<dbReference type="InterPro" id="IPR032677">
    <property type="entry name" value="GTP_cyclohydro_II"/>
</dbReference>
<dbReference type="InterPro" id="IPR000926">
    <property type="entry name" value="RibA"/>
</dbReference>
<dbReference type="InterPro" id="IPR036144">
    <property type="entry name" value="RibA-like_sf"/>
</dbReference>
<dbReference type="InterPro" id="IPR016299">
    <property type="entry name" value="Riboflavin_synth_RibBA"/>
</dbReference>
<dbReference type="NCBIfam" id="NF001591">
    <property type="entry name" value="PRK00393.1"/>
    <property type="match status" value="1"/>
</dbReference>
<dbReference type="NCBIfam" id="NF006803">
    <property type="entry name" value="PRK09311.1"/>
    <property type="match status" value="1"/>
</dbReference>
<dbReference type="NCBIfam" id="TIGR00505">
    <property type="entry name" value="ribA"/>
    <property type="match status" value="1"/>
</dbReference>
<dbReference type="NCBIfam" id="TIGR00506">
    <property type="entry name" value="ribB"/>
    <property type="match status" value="1"/>
</dbReference>
<dbReference type="PANTHER" id="PTHR21327">
    <property type="entry name" value="GTP CYCLOHYDROLASE II-RELATED"/>
    <property type="match status" value="1"/>
</dbReference>
<dbReference type="PANTHER" id="PTHR21327:SF29">
    <property type="entry name" value="GTP CYCLOHYDROLASE-2"/>
    <property type="match status" value="1"/>
</dbReference>
<dbReference type="Pfam" id="PF00926">
    <property type="entry name" value="DHBP_synthase"/>
    <property type="match status" value="1"/>
</dbReference>
<dbReference type="Pfam" id="PF00925">
    <property type="entry name" value="GTP_cyclohydro2"/>
    <property type="match status" value="1"/>
</dbReference>
<dbReference type="SUPFAM" id="SSF142695">
    <property type="entry name" value="RibA-like"/>
    <property type="match status" value="1"/>
</dbReference>
<dbReference type="SUPFAM" id="SSF55821">
    <property type="entry name" value="YrdC/RibB"/>
    <property type="match status" value="1"/>
</dbReference>
<accession>Q6L506</accession>
<accession>A0A0P0WNE0</accession>
<accession>Q84PC2</accession>
<feature type="transit peptide" description="Chloroplast" evidence="2">
    <location>
        <begin position="1"/>
        <end position="43"/>
    </location>
</feature>
<feature type="chain" id="PRO_0000422712" description="Probable monofunctional riboflavin biosynthesis protein RIBA 3, chloroplastic">
    <location>
        <begin position="44"/>
        <end position="536"/>
    </location>
</feature>
<feature type="region of interest" description="Inactive DHBP synthase" evidence="1">
    <location>
        <begin position="44"/>
        <end position="310"/>
    </location>
</feature>
<feature type="region of interest" description="GTP cyclohydrolase II" evidence="1">
    <location>
        <begin position="311"/>
        <end position="536"/>
    </location>
</feature>
<feature type="region of interest" description="Disordered" evidence="3">
    <location>
        <begin position="507"/>
        <end position="536"/>
    </location>
</feature>
<feature type="compositionally biased region" description="Acidic residues" evidence="3">
    <location>
        <begin position="525"/>
        <end position="536"/>
    </location>
</feature>
<feature type="active site" description="Proton acceptor; for GTP cyclohydrolase activity" evidence="2">
    <location>
        <position position="439"/>
    </location>
</feature>
<feature type="active site" description="Nucleophile; for GTP cyclohydrolase activity" evidence="1">
    <location>
        <position position="441"/>
    </location>
</feature>
<feature type="binding site" evidence="1">
    <location>
        <begin position="133"/>
        <end position="134"/>
    </location>
    <ligand>
        <name>D-ribulose 5-phosphate</name>
        <dbReference type="ChEBI" id="CHEBI:58121"/>
    </ligand>
</feature>
<feature type="binding site" evidence="1">
    <location>
        <position position="138"/>
    </location>
    <ligand>
        <name>D-ribulose 5-phosphate</name>
        <dbReference type="ChEBI" id="CHEBI:58121"/>
    </ligand>
</feature>
<feature type="binding site" evidence="1">
    <location>
        <begin position="248"/>
        <end position="252"/>
    </location>
    <ligand>
        <name>D-ribulose 5-phosphate</name>
        <dbReference type="ChEBI" id="CHEBI:58121"/>
    </ligand>
</feature>
<feature type="binding site" evidence="1">
    <location>
        <begin position="361"/>
        <end position="365"/>
    </location>
    <ligand>
        <name>GTP</name>
        <dbReference type="ChEBI" id="CHEBI:37565"/>
    </ligand>
</feature>
<feature type="binding site" evidence="1">
    <location>
        <position position="366"/>
    </location>
    <ligand>
        <name>Zn(2+)</name>
        <dbReference type="ChEBI" id="CHEBI:29105"/>
        <note>catalytic</note>
    </ligand>
</feature>
<feature type="binding site" evidence="1">
    <location>
        <position position="377"/>
    </location>
    <ligand>
        <name>Zn(2+)</name>
        <dbReference type="ChEBI" id="CHEBI:29105"/>
        <note>catalytic</note>
    </ligand>
</feature>
<feature type="binding site" evidence="1">
    <location>
        <position position="379"/>
    </location>
    <ligand>
        <name>Zn(2+)</name>
        <dbReference type="ChEBI" id="CHEBI:29105"/>
        <note>catalytic</note>
    </ligand>
</feature>
<feature type="binding site" evidence="1">
    <location>
        <position position="382"/>
    </location>
    <ligand>
        <name>GTP</name>
        <dbReference type="ChEBI" id="CHEBI:37565"/>
    </ligand>
</feature>
<feature type="binding site" evidence="1">
    <location>
        <begin position="405"/>
        <end position="407"/>
    </location>
    <ligand>
        <name>GTP</name>
        <dbReference type="ChEBI" id="CHEBI:37565"/>
    </ligand>
</feature>
<feature type="binding site" evidence="1">
    <location>
        <position position="427"/>
    </location>
    <ligand>
        <name>GTP</name>
        <dbReference type="ChEBI" id="CHEBI:37565"/>
    </ligand>
</feature>
<feature type="binding site" evidence="1">
    <location>
        <position position="462"/>
    </location>
    <ligand>
        <name>GTP</name>
        <dbReference type="ChEBI" id="CHEBI:37565"/>
    </ligand>
</feature>
<feature type="binding site" evidence="1">
    <location>
        <position position="467"/>
    </location>
    <ligand>
        <name>GTP</name>
        <dbReference type="ChEBI" id="CHEBI:37565"/>
    </ligand>
</feature>
<name>RIBA3_ORYSJ</name>
<proteinExistence type="evidence at transcript level"/>
<comment type="function">
    <text evidence="1">Involved in riboflavin biosynthesis. Catalyzes the conversion of GTP to 2,5-diamino-6-ribosylamino-4(3H)-pyrimidinone 5'-phosphate (DARP), formate and pyrophosphate (By similarity).</text>
</comment>
<comment type="catalytic activity">
    <reaction>
        <text>GTP + 4 H2O = 2,5-diamino-6-hydroxy-4-(5-phosphoribosylamino)-pyrimidine + formate + 2 phosphate + 3 H(+)</text>
        <dbReference type="Rhea" id="RHEA:23704"/>
        <dbReference type="ChEBI" id="CHEBI:15377"/>
        <dbReference type="ChEBI" id="CHEBI:15378"/>
        <dbReference type="ChEBI" id="CHEBI:15740"/>
        <dbReference type="ChEBI" id="CHEBI:37565"/>
        <dbReference type="ChEBI" id="CHEBI:43474"/>
        <dbReference type="ChEBI" id="CHEBI:58614"/>
        <dbReference type="EC" id="3.5.4.25"/>
    </reaction>
</comment>
<comment type="cofactor">
    <cofactor evidence="1">
        <name>Zn(2+)</name>
        <dbReference type="ChEBI" id="CHEBI:29105"/>
    </cofactor>
    <text evidence="1">Binds 1 zinc ion per subunit.</text>
</comment>
<comment type="pathway">
    <text>Cofactor biosynthesis; riboflavin biosynthesis; 5-amino-6-(D-ribitylamino)uracil from GTP: step 1/4.</text>
</comment>
<comment type="subcellular location">
    <subcellularLocation>
        <location evidence="4">Plastid</location>
        <location evidence="4">Chloroplast</location>
    </subcellularLocation>
</comment>
<comment type="similarity">
    <text evidence="4">In the N-terminal section; belongs to the DHBP synthase family.</text>
</comment>
<comment type="similarity">
    <text evidence="4">In the C-terminal section; belongs to the GTP cyclohydrolase II family.</text>
</comment>
<comment type="caution">
    <text evidence="4">The substrate-binding sites for the inactive DHBP synthase activity are conserved while several cofactor-binding sites are lost.</text>
</comment>
<sequence length="536" mass="57327">MDRVLLSSQLSSQTVVNTRVQQGSGGINSIGFAVIRKGSLKLRCYAIGGLGGGENLNDPLKESNNGPVLQGFNGSSASFRTVGAKITQETGDFFVSDAEGDPDKPTDGFSSIDEAIGALHEGKFVIAVDDESGDNEGDLVMAATLADPESIAFMIRNGSGIISVGMKEEDLTRLMIPMMSPIAEIEDISAAASTVTVDARVGISTGVSAADRAKTIFTLASPDSKPTDLRRPGHIFPLKYRNGGVLKRAGHTEASVDLVALAGLRPVSVLSTVINPVDGSMAGMPVLKQMALEHDIPIVSIADLIRYRRKREKLVELIAVSRLPTKWGLFRAYCYQSKLDGTEHIAVAKGDIGDGEDVLVRVHSECLTGDILGSARCDCGNQLDLAMQLIDKAGRGVLVYLRGHEGRGIGLGQKLRAYNLQDDGHDTVQANVELGLAVDSREYGIGAQILRDMGVRTMRLMTNNPAKFVGLKGYGLAVVGRVPVISPITKENQRYLETKRTKMGHVYGSDLPGNVPEEFLNPDDIAGDQDEDDTHN</sequence>
<gene>
    <name type="primary">RIBA3</name>
    <name type="ordered locus">Os05g0460600</name>
    <name type="ORF">OJ1281_H05.8</name>
    <name type="ORF">OsJ_18816</name>
</gene>
<reference key="1">
    <citation type="journal article" date="2005" name="Mol. Genet. Genomics">
        <title>A fine physical map of the rice chromosome 5.</title>
        <authorList>
            <person name="Cheng C.-H."/>
            <person name="Chung M.C."/>
            <person name="Liu S.-M."/>
            <person name="Chen S.-K."/>
            <person name="Kao F.Y."/>
            <person name="Lin S.-J."/>
            <person name="Hsiao S.-H."/>
            <person name="Tseng I.C."/>
            <person name="Hsing Y.-I.C."/>
            <person name="Wu H.-P."/>
            <person name="Chen C.-S."/>
            <person name="Shaw J.-F."/>
            <person name="Wu J."/>
            <person name="Matsumoto T."/>
            <person name="Sasaki T."/>
            <person name="Chen H.-C."/>
            <person name="Chow T.-Y."/>
        </authorList>
    </citation>
    <scope>NUCLEOTIDE SEQUENCE [LARGE SCALE GENOMIC DNA]</scope>
    <source>
        <strain>cv. Nipponbare</strain>
    </source>
</reference>
<reference key="2">
    <citation type="journal article" date="2005" name="Nature">
        <title>The map-based sequence of the rice genome.</title>
        <authorList>
            <consortium name="International rice genome sequencing project (IRGSP)"/>
        </authorList>
    </citation>
    <scope>NUCLEOTIDE SEQUENCE [LARGE SCALE GENOMIC DNA]</scope>
    <source>
        <strain>cv. Nipponbare</strain>
    </source>
</reference>
<reference key="3">
    <citation type="journal article" date="2008" name="Nucleic Acids Res.">
        <title>The rice annotation project database (RAP-DB): 2008 update.</title>
        <authorList>
            <consortium name="The rice annotation project (RAP)"/>
        </authorList>
    </citation>
    <scope>GENOME REANNOTATION</scope>
    <source>
        <strain>cv. Nipponbare</strain>
    </source>
</reference>
<reference key="4">
    <citation type="journal article" date="2013" name="Rice">
        <title>Improvement of the Oryza sativa Nipponbare reference genome using next generation sequence and optical map data.</title>
        <authorList>
            <person name="Kawahara Y."/>
            <person name="de la Bastide M."/>
            <person name="Hamilton J.P."/>
            <person name="Kanamori H."/>
            <person name="McCombie W.R."/>
            <person name="Ouyang S."/>
            <person name="Schwartz D.C."/>
            <person name="Tanaka T."/>
            <person name="Wu J."/>
            <person name="Zhou S."/>
            <person name="Childs K.L."/>
            <person name="Davidson R.M."/>
            <person name="Lin H."/>
            <person name="Quesada-Ocampo L."/>
            <person name="Vaillancourt B."/>
            <person name="Sakai H."/>
            <person name="Lee S.S."/>
            <person name="Kim J."/>
            <person name="Numa H."/>
            <person name="Itoh T."/>
            <person name="Buell C.R."/>
            <person name="Matsumoto T."/>
        </authorList>
    </citation>
    <scope>GENOME REANNOTATION</scope>
    <source>
        <strain>cv. Nipponbare</strain>
    </source>
</reference>
<reference key="5">
    <citation type="journal article" date="2005" name="PLoS Biol.">
        <title>The genomes of Oryza sativa: a history of duplications.</title>
        <authorList>
            <person name="Yu J."/>
            <person name="Wang J."/>
            <person name="Lin W."/>
            <person name="Li S."/>
            <person name="Li H."/>
            <person name="Zhou J."/>
            <person name="Ni P."/>
            <person name="Dong W."/>
            <person name="Hu S."/>
            <person name="Zeng C."/>
            <person name="Zhang J."/>
            <person name="Zhang Y."/>
            <person name="Li R."/>
            <person name="Xu Z."/>
            <person name="Li S."/>
            <person name="Li X."/>
            <person name="Zheng H."/>
            <person name="Cong L."/>
            <person name="Lin L."/>
            <person name="Yin J."/>
            <person name="Geng J."/>
            <person name="Li G."/>
            <person name="Shi J."/>
            <person name="Liu J."/>
            <person name="Lv H."/>
            <person name="Li J."/>
            <person name="Wang J."/>
            <person name="Deng Y."/>
            <person name="Ran L."/>
            <person name="Shi X."/>
            <person name="Wang X."/>
            <person name="Wu Q."/>
            <person name="Li C."/>
            <person name="Ren X."/>
            <person name="Wang J."/>
            <person name="Wang X."/>
            <person name="Li D."/>
            <person name="Liu D."/>
            <person name="Zhang X."/>
            <person name="Ji Z."/>
            <person name="Zhao W."/>
            <person name="Sun Y."/>
            <person name="Zhang Z."/>
            <person name="Bao J."/>
            <person name="Han Y."/>
            <person name="Dong L."/>
            <person name="Ji J."/>
            <person name="Chen P."/>
            <person name="Wu S."/>
            <person name="Liu J."/>
            <person name="Xiao Y."/>
            <person name="Bu D."/>
            <person name="Tan J."/>
            <person name="Yang L."/>
            <person name="Ye C."/>
            <person name="Zhang J."/>
            <person name="Xu J."/>
            <person name="Zhou Y."/>
            <person name="Yu Y."/>
            <person name="Zhang B."/>
            <person name="Zhuang S."/>
            <person name="Wei H."/>
            <person name="Liu B."/>
            <person name="Lei M."/>
            <person name="Yu H."/>
            <person name="Li Y."/>
            <person name="Xu H."/>
            <person name="Wei S."/>
            <person name="He X."/>
            <person name="Fang L."/>
            <person name="Zhang Z."/>
            <person name="Zhang Y."/>
            <person name="Huang X."/>
            <person name="Su Z."/>
            <person name="Tong W."/>
            <person name="Li J."/>
            <person name="Tong Z."/>
            <person name="Li S."/>
            <person name="Ye J."/>
            <person name="Wang L."/>
            <person name="Fang L."/>
            <person name="Lei T."/>
            <person name="Chen C.-S."/>
            <person name="Chen H.-C."/>
            <person name="Xu Z."/>
            <person name="Li H."/>
            <person name="Huang H."/>
            <person name="Zhang F."/>
            <person name="Xu H."/>
            <person name="Li N."/>
            <person name="Zhao C."/>
            <person name="Li S."/>
            <person name="Dong L."/>
            <person name="Huang Y."/>
            <person name="Li L."/>
            <person name="Xi Y."/>
            <person name="Qi Q."/>
            <person name="Li W."/>
            <person name="Zhang B."/>
            <person name="Hu W."/>
            <person name="Zhang Y."/>
            <person name="Tian X."/>
            <person name="Jiao Y."/>
            <person name="Liang X."/>
            <person name="Jin J."/>
            <person name="Gao L."/>
            <person name="Zheng W."/>
            <person name="Hao B."/>
            <person name="Liu S.-M."/>
            <person name="Wang W."/>
            <person name="Yuan L."/>
            <person name="Cao M."/>
            <person name="McDermott J."/>
            <person name="Samudrala R."/>
            <person name="Wang J."/>
            <person name="Wong G.K.-S."/>
            <person name="Yang H."/>
        </authorList>
    </citation>
    <scope>NUCLEOTIDE SEQUENCE [LARGE SCALE GENOMIC DNA]</scope>
    <source>
        <strain>cv. Nipponbare</strain>
    </source>
</reference>
<reference key="6">
    <citation type="journal article" date="2003" name="Proc. Natl. Acad. Sci. U.S.A.">
        <title>A network of rice genes associated with stress response and seed development.</title>
        <authorList>
            <person name="Cooper B."/>
            <person name="Clarke J.D."/>
            <person name="Budworth P."/>
            <person name="Kreps J."/>
            <person name="Hutchison D."/>
            <person name="Park S."/>
            <person name="Guimil S."/>
            <person name="Dunn M."/>
            <person name="Luginbuehl P."/>
            <person name="Ellero C."/>
            <person name="Goff S.A."/>
            <person name="Glazebrook J."/>
        </authorList>
    </citation>
    <scope>NUCLEOTIDE SEQUENCE [MRNA] OF 77-536</scope>
</reference>
<evidence type="ECO:0000250" key="1"/>
<evidence type="ECO:0000255" key="2"/>
<evidence type="ECO:0000256" key="3">
    <source>
        <dbReference type="SAM" id="MobiDB-lite"/>
    </source>
</evidence>
<evidence type="ECO:0000305" key="4"/>
<keyword id="KW-0150">Chloroplast</keyword>
<keyword id="KW-0342">GTP-binding</keyword>
<keyword id="KW-0378">Hydrolase</keyword>
<keyword id="KW-0479">Metal-binding</keyword>
<keyword id="KW-0547">Nucleotide-binding</keyword>
<keyword id="KW-0934">Plastid</keyword>
<keyword id="KW-1185">Reference proteome</keyword>
<keyword id="KW-0686">Riboflavin biosynthesis</keyword>
<keyword id="KW-0809">Transit peptide</keyword>
<keyword id="KW-0862">Zinc</keyword>
<organism>
    <name type="scientific">Oryza sativa subsp. japonica</name>
    <name type="common">Rice</name>
    <dbReference type="NCBI Taxonomy" id="39947"/>
    <lineage>
        <taxon>Eukaryota</taxon>
        <taxon>Viridiplantae</taxon>
        <taxon>Streptophyta</taxon>
        <taxon>Embryophyta</taxon>
        <taxon>Tracheophyta</taxon>
        <taxon>Spermatophyta</taxon>
        <taxon>Magnoliopsida</taxon>
        <taxon>Liliopsida</taxon>
        <taxon>Poales</taxon>
        <taxon>Poaceae</taxon>
        <taxon>BOP clade</taxon>
        <taxon>Oryzoideae</taxon>
        <taxon>Oryzeae</taxon>
        <taxon>Oryzinae</taxon>
        <taxon>Oryza</taxon>
        <taxon>Oryza sativa</taxon>
    </lineage>
</organism>